<name>RL30_RHILO</name>
<sequence>MAKKATKTITVEQIGSPIRRPKEQRATLVGLGLNKMHKQRTLEDTPSVRGMIAAVQHLVRVVDEG</sequence>
<accession>Q98N39</accession>
<dbReference type="EMBL" id="BA000012">
    <property type="protein sequence ID" value="BAB47924.1"/>
    <property type="molecule type" value="Genomic_DNA"/>
</dbReference>
<dbReference type="RefSeq" id="WP_006205449.1">
    <property type="nucleotide sequence ID" value="NC_002678.2"/>
</dbReference>
<dbReference type="SMR" id="Q98N39"/>
<dbReference type="GeneID" id="91561402"/>
<dbReference type="KEGG" id="mlo:msr0316"/>
<dbReference type="eggNOG" id="COG1841">
    <property type="taxonomic scope" value="Bacteria"/>
</dbReference>
<dbReference type="HOGENOM" id="CLU_131047_1_2_5"/>
<dbReference type="Proteomes" id="UP000000552">
    <property type="component" value="Chromosome"/>
</dbReference>
<dbReference type="GO" id="GO:0022625">
    <property type="term" value="C:cytosolic large ribosomal subunit"/>
    <property type="evidence" value="ECO:0007669"/>
    <property type="project" value="TreeGrafter"/>
</dbReference>
<dbReference type="GO" id="GO:0003735">
    <property type="term" value="F:structural constituent of ribosome"/>
    <property type="evidence" value="ECO:0007669"/>
    <property type="project" value="InterPro"/>
</dbReference>
<dbReference type="GO" id="GO:0006412">
    <property type="term" value="P:translation"/>
    <property type="evidence" value="ECO:0007669"/>
    <property type="project" value="UniProtKB-UniRule"/>
</dbReference>
<dbReference type="CDD" id="cd01658">
    <property type="entry name" value="Ribosomal_L30"/>
    <property type="match status" value="1"/>
</dbReference>
<dbReference type="Gene3D" id="3.30.1390.20">
    <property type="entry name" value="Ribosomal protein L30, ferredoxin-like fold domain"/>
    <property type="match status" value="1"/>
</dbReference>
<dbReference type="HAMAP" id="MF_01371_B">
    <property type="entry name" value="Ribosomal_uL30_B"/>
    <property type="match status" value="1"/>
</dbReference>
<dbReference type="InterPro" id="IPR036919">
    <property type="entry name" value="Ribo_uL30_ferredoxin-like_sf"/>
</dbReference>
<dbReference type="InterPro" id="IPR005996">
    <property type="entry name" value="Ribosomal_uL30_bac-type"/>
</dbReference>
<dbReference type="InterPro" id="IPR016082">
    <property type="entry name" value="Ribosomal_uL30_ferredoxin-like"/>
</dbReference>
<dbReference type="NCBIfam" id="TIGR01308">
    <property type="entry name" value="rpmD_bact"/>
    <property type="match status" value="1"/>
</dbReference>
<dbReference type="PANTHER" id="PTHR15892:SF2">
    <property type="entry name" value="LARGE RIBOSOMAL SUBUNIT PROTEIN UL30M"/>
    <property type="match status" value="1"/>
</dbReference>
<dbReference type="PANTHER" id="PTHR15892">
    <property type="entry name" value="MITOCHONDRIAL RIBOSOMAL PROTEIN L30"/>
    <property type="match status" value="1"/>
</dbReference>
<dbReference type="Pfam" id="PF00327">
    <property type="entry name" value="Ribosomal_L30"/>
    <property type="match status" value="1"/>
</dbReference>
<dbReference type="PIRSF" id="PIRSF002211">
    <property type="entry name" value="Ribosomal_L30_bac-type"/>
    <property type="match status" value="1"/>
</dbReference>
<dbReference type="SUPFAM" id="SSF55129">
    <property type="entry name" value="Ribosomal protein L30p/L7e"/>
    <property type="match status" value="1"/>
</dbReference>
<reference key="1">
    <citation type="journal article" date="2000" name="DNA Res.">
        <title>Complete genome structure of the nitrogen-fixing symbiotic bacterium Mesorhizobium loti.</title>
        <authorList>
            <person name="Kaneko T."/>
            <person name="Nakamura Y."/>
            <person name="Sato S."/>
            <person name="Asamizu E."/>
            <person name="Kato T."/>
            <person name="Sasamoto S."/>
            <person name="Watanabe A."/>
            <person name="Idesawa K."/>
            <person name="Ishikawa A."/>
            <person name="Kawashima K."/>
            <person name="Kimura T."/>
            <person name="Kishida Y."/>
            <person name="Kiyokawa C."/>
            <person name="Kohara M."/>
            <person name="Matsumoto M."/>
            <person name="Matsuno A."/>
            <person name="Mochizuki Y."/>
            <person name="Nakayama S."/>
            <person name="Nakazaki N."/>
            <person name="Shimpo S."/>
            <person name="Sugimoto M."/>
            <person name="Takeuchi C."/>
            <person name="Yamada M."/>
            <person name="Tabata S."/>
        </authorList>
    </citation>
    <scope>NUCLEOTIDE SEQUENCE [LARGE SCALE GENOMIC DNA]</scope>
    <source>
        <strain>LMG 29417 / CECT 9101 / MAFF 303099</strain>
    </source>
</reference>
<comment type="subunit">
    <text evidence="1">Part of the 50S ribosomal subunit.</text>
</comment>
<comment type="similarity">
    <text evidence="1">Belongs to the universal ribosomal protein uL30 family.</text>
</comment>
<evidence type="ECO:0000255" key="1">
    <source>
        <dbReference type="HAMAP-Rule" id="MF_01371"/>
    </source>
</evidence>
<evidence type="ECO:0000305" key="2"/>
<protein>
    <recommendedName>
        <fullName evidence="1">Large ribosomal subunit protein uL30</fullName>
    </recommendedName>
    <alternativeName>
        <fullName evidence="2">50S ribosomal protein L30</fullName>
    </alternativeName>
</protein>
<feature type="chain" id="PRO_0000347136" description="Large ribosomal subunit protein uL30">
    <location>
        <begin position="1"/>
        <end position="65"/>
    </location>
</feature>
<organism>
    <name type="scientific">Mesorhizobium japonicum (strain LMG 29417 / CECT 9101 / MAFF 303099)</name>
    <name type="common">Mesorhizobium loti (strain MAFF 303099)</name>
    <dbReference type="NCBI Taxonomy" id="266835"/>
    <lineage>
        <taxon>Bacteria</taxon>
        <taxon>Pseudomonadati</taxon>
        <taxon>Pseudomonadota</taxon>
        <taxon>Alphaproteobacteria</taxon>
        <taxon>Hyphomicrobiales</taxon>
        <taxon>Phyllobacteriaceae</taxon>
        <taxon>Mesorhizobium</taxon>
    </lineage>
</organism>
<proteinExistence type="inferred from homology"/>
<gene>
    <name evidence="1" type="primary">rpmD</name>
    <name type="ordered locus">msr0316</name>
</gene>
<keyword id="KW-0687">Ribonucleoprotein</keyword>
<keyword id="KW-0689">Ribosomal protein</keyword>